<feature type="chain" id="PRO_0000141416" description="4-hydroxy-tetrahydrodipicolinate reductase">
    <location>
        <begin position="1"/>
        <end position="271"/>
    </location>
</feature>
<feature type="active site" description="Proton donor/acceptor" evidence="1">
    <location>
        <position position="157"/>
    </location>
</feature>
<feature type="active site" description="Proton donor" evidence="1">
    <location>
        <position position="161"/>
    </location>
</feature>
<feature type="binding site" evidence="1">
    <location>
        <begin position="10"/>
        <end position="15"/>
    </location>
    <ligand>
        <name>NAD(+)</name>
        <dbReference type="ChEBI" id="CHEBI:57540"/>
    </ligand>
</feature>
<feature type="binding site" evidence="1">
    <location>
        <position position="36"/>
    </location>
    <ligand>
        <name>NAD(+)</name>
        <dbReference type="ChEBI" id="CHEBI:57540"/>
    </ligand>
</feature>
<feature type="binding site" evidence="1">
    <location>
        <begin position="100"/>
        <end position="102"/>
    </location>
    <ligand>
        <name>NAD(+)</name>
        <dbReference type="ChEBI" id="CHEBI:57540"/>
    </ligand>
</feature>
<feature type="binding site" evidence="1">
    <location>
        <begin position="124"/>
        <end position="127"/>
    </location>
    <ligand>
        <name>NAD(+)</name>
        <dbReference type="ChEBI" id="CHEBI:57540"/>
    </ligand>
</feature>
<feature type="binding site" evidence="1">
    <location>
        <position position="158"/>
    </location>
    <ligand>
        <name>(S)-2,3,4,5-tetrahydrodipicolinate</name>
        <dbReference type="ChEBI" id="CHEBI:16845"/>
    </ligand>
</feature>
<feature type="binding site" evidence="1">
    <location>
        <begin position="167"/>
        <end position="168"/>
    </location>
    <ligand>
        <name>(S)-2,3,4,5-tetrahydrodipicolinate</name>
        <dbReference type="ChEBI" id="CHEBI:16845"/>
    </ligand>
</feature>
<accession>Q89WK2</accession>
<protein>
    <recommendedName>
        <fullName evidence="1">4-hydroxy-tetrahydrodipicolinate reductase</fullName>
        <shortName evidence="1">HTPA reductase</shortName>
        <ecNumber evidence="1">1.17.1.8</ecNumber>
    </recommendedName>
</protein>
<sequence>MSDMRLIVAGAGGRMGRALTRAIAESKGAVLAGALEAPGSEMLGKDAGVLAGLPANGIKLSADLWAMSKEADGILDFTVPAATIANVAIAAERGIVHVIGTTGLSGSDNAVIKSVTNRAVVVQSGNMSLGVNLLAAVVKRVAKALDQSFDIEIVETHHRMKIDAPSGTALMLGQAAAAGRGISLDEHADRGRDGITGARKPGNIGFASLRGGTAAGDHSVSFLGPFERLTLSHQAEDRMLFAHGALKAALWAHGKKPGHYSMADVLGLADI</sequence>
<comment type="function">
    <text evidence="1">Catalyzes the conversion of 4-hydroxy-tetrahydrodipicolinate (HTPA) to tetrahydrodipicolinate.</text>
</comment>
<comment type="catalytic activity">
    <reaction evidence="1">
        <text>(S)-2,3,4,5-tetrahydrodipicolinate + NAD(+) + H2O = (2S,4S)-4-hydroxy-2,3,4,5-tetrahydrodipicolinate + NADH + H(+)</text>
        <dbReference type="Rhea" id="RHEA:35323"/>
        <dbReference type="ChEBI" id="CHEBI:15377"/>
        <dbReference type="ChEBI" id="CHEBI:15378"/>
        <dbReference type="ChEBI" id="CHEBI:16845"/>
        <dbReference type="ChEBI" id="CHEBI:57540"/>
        <dbReference type="ChEBI" id="CHEBI:57945"/>
        <dbReference type="ChEBI" id="CHEBI:67139"/>
        <dbReference type="EC" id="1.17.1.8"/>
    </reaction>
</comment>
<comment type="catalytic activity">
    <reaction evidence="1">
        <text>(S)-2,3,4,5-tetrahydrodipicolinate + NADP(+) + H2O = (2S,4S)-4-hydroxy-2,3,4,5-tetrahydrodipicolinate + NADPH + H(+)</text>
        <dbReference type="Rhea" id="RHEA:35331"/>
        <dbReference type="ChEBI" id="CHEBI:15377"/>
        <dbReference type="ChEBI" id="CHEBI:15378"/>
        <dbReference type="ChEBI" id="CHEBI:16845"/>
        <dbReference type="ChEBI" id="CHEBI:57783"/>
        <dbReference type="ChEBI" id="CHEBI:58349"/>
        <dbReference type="ChEBI" id="CHEBI:67139"/>
        <dbReference type="EC" id="1.17.1.8"/>
    </reaction>
</comment>
<comment type="pathway">
    <text evidence="1">Amino-acid biosynthesis; L-lysine biosynthesis via DAP pathway; (S)-tetrahydrodipicolinate from L-aspartate: step 4/4.</text>
</comment>
<comment type="subcellular location">
    <subcellularLocation>
        <location evidence="1">Cytoplasm</location>
    </subcellularLocation>
</comment>
<comment type="similarity">
    <text evidence="1">Belongs to the DapB family.</text>
</comment>
<comment type="caution">
    <text evidence="2">Was originally thought to be a dihydrodipicolinate reductase (DHDPR), catalyzing the conversion of dihydrodipicolinate to tetrahydrodipicolinate. However, it was shown in E.coli that the substrate of the enzymatic reaction is not dihydrodipicolinate (DHDP) but in fact (2S,4S)-4-hydroxy-2,3,4,5-tetrahydrodipicolinic acid (HTPA), the product released by the DapA-catalyzed reaction.</text>
</comment>
<comment type="sequence caution" evidence="2">
    <conflict type="erroneous initiation">
        <sequence resource="EMBL-CDS" id="BAC45950"/>
    </conflict>
</comment>
<name>DAPB_BRADU</name>
<gene>
    <name evidence="1" type="primary">dapB</name>
    <name type="ordered locus">blr0685</name>
</gene>
<reference key="1">
    <citation type="journal article" date="2002" name="DNA Res.">
        <title>Complete genomic sequence of nitrogen-fixing symbiotic bacterium Bradyrhizobium japonicum USDA110.</title>
        <authorList>
            <person name="Kaneko T."/>
            <person name="Nakamura Y."/>
            <person name="Sato S."/>
            <person name="Minamisawa K."/>
            <person name="Uchiumi T."/>
            <person name="Sasamoto S."/>
            <person name="Watanabe A."/>
            <person name="Idesawa K."/>
            <person name="Iriguchi M."/>
            <person name="Kawashima K."/>
            <person name="Kohara M."/>
            <person name="Matsumoto M."/>
            <person name="Shimpo S."/>
            <person name="Tsuruoka H."/>
            <person name="Wada T."/>
            <person name="Yamada M."/>
            <person name="Tabata S."/>
        </authorList>
    </citation>
    <scope>NUCLEOTIDE SEQUENCE [LARGE SCALE GENOMIC DNA]</scope>
    <source>
        <strain>JCM 10833 / BCRC 13528 / IAM 13628 / NBRC 14792 / USDA 110</strain>
    </source>
</reference>
<keyword id="KW-0028">Amino-acid biosynthesis</keyword>
<keyword id="KW-0963">Cytoplasm</keyword>
<keyword id="KW-0220">Diaminopimelate biosynthesis</keyword>
<keyword id="KW-0457">Lysine biosynthesis</keyword>
<keyword id="KW-0520">NAD</keyword>
<keyword id="KW-0521">NADP</keyword>
<keyword id="KW-0560">Oxidoreductase</keyword>
<keyword id="KW-1185">Reference proteome</keyword>
<evidence type="ECO:0000255" key="1">
    <source>
        <dbReference type="HAMAP-Rule" id="MF_00102"/>
    </source>
</evidence>
<evidence type="ECO:0000305" key="2"/>
<dbReference type="EC" id="1.17.1.8" evidence="1"/>
<dbReference type="EMBL" id="BA000040">
    <property type="protein sequence ID" value="BAC45950.1"/>
    <property type="status" value="ALT_INIT"/>
    <property type="molecule type" value="Genomic_DNA"/>
</dbReference>
<dbReference type="RefSeq" id="NP_767325.1">
    <property type="nucleotide sequence ID" value="NC_004463.1"/>
</dbReference>
<dbReference type="RefSeq" id="WP_038965144.1">
    <property type="nucleotide sequence ID" value="NC_004463.1"/>
</dbReference>
<dbReference type="SMR" id="Q89WK2"/>
<dbReference type="FunCoup" id="Q89WK2">
    <property type="interactions" value="593"/>
</dbReference>
<dbReference type="STRING" id="224911.AAV28_00260"/>
<dbReference type="EnsemblBacteria" id="BAC45950">
    <property type="protein sequence ID" value="BAC45950"/>
    <property type="gene ID" value="BAC45950"/>
</dbReference>
<dbReference type="GeneID" id="46487958"/>
<dbReference type="KEGG" id="bja:blr0685"/>
<dbReference type="PATRIC" id="fig|224911.44.peg.55"/>
<dbReference type="eggNOG" id="COG0289">
    <property type="taxonomic scope" value="Bacteria"/>
</dbReference>
<dbReference type="HOGENOM" id="CLU_047479_2_1_5"/>
<dbReference type="InParanoid" id="Q89WK2"/>
<dbReference type="OrthoDB" id="9790352at2"/>
<dbReference type="UniPathway" id="UPA00034">
    <property type="reaction ID" value="UER00018"/>
</dbReference>
<dbReference type="Proteomes" id="UP000002526">
    <property type="component" value="Chromosome"/>
</dbReference>
<dbReference type="GO" id="GO:0005829">
    <property type="term" value="C:cytosol"/>
    <property type="evidence" value="ECO:0000318"/>
    <property type="project" value="GO_Central"/>
</dbReference>
<dbReference type="GO" id="GO:0008839">
    <property type="term" value="F:4-hydroxy-tetrahydrodipicolinate reductase"/>
    <property type="evidence" value="ECO:0000318"/>
    <property type="project" value="GO_Central"/>
</dbReference>
<dbReference type="GO" id="GO:0051287">
    <property type="term" value="F:NAD binding"/>
    <property type="evidence" value="ECO:0007669"/>
    <property type="project" value="UniProtKB-UniRule"/>
</dbReference>
<dbReference type="GO" id="GO:0050661">
    <property type="term" value="F:NADP binding"/>
    <property type="evidence" value="ECO:0007669"/>
    <property type="project" value="UniProtKB-UniRule"/>
</dbReference>
<dbReference type="GO" id="GO:0016726">
    <property type="term" value="F:oxidoreductase activity, acting on CH or CH2 groups, NAD or NADP as acceptor"/>
    <property type="evidence" value="ECO:0007669"/>
    <property type="project" value="UniProtKB-UniRule"/>
</dbReference>
<dbReference type="GO" id="GO:0019877">
    <property type="term" value="P:diaminopimelate biosynthetic process"/>
    <property type="evidence" value="ECO:0000318"/>
    <property type="project" value="GO_Central"/>
</dbReference>
<dbReference type="GO" id="GO:0009089">
    <property type="term" value="P:lysine biosynthetic process via diaminopimelate"/>
    <property type="evidence" value="ECO:0007669"/>
    <property type="project" value="UniProtKB-UniRule"/>
</dbReference>
<dbReference type="CDD" id="cd02274">
    <property type="entry name" value="DHDPR_N"/>
    <property type="match status" value="1"/>
</dbReference>
<dbReference type="FunFam" id="3.30.360.10:FF:000004">
    <property type="entry name" value="4-hydroxy-tetrahydrodipicolinate reductase"/>
    <property type="match status" value="1"/>
</dbReference>
<dbReference type="Gene3D" id="3.30.360.10">
    <property type="entry name" value="Dihydrodipicolinate Reductase, domain 2"/>
    <property type="match status" value="1"/>
</dbReference>
<dbReference type="Gene3D" id="3.40.50.720">
    <property type="entry name" value="NAD(P)-binding Rossmann-like Domain"/>
    <property type="match status" value="1"/>
</dbReference>
<dbReference type="HAMAP" id="MF_00102">
    <property type="entry name" value="DapB"/>
    <property type="match status" value="1"/>
</dbReference>
<dbReference type="InterPro" id="IPR022663">
    <property type="entry name" value="DapB_C"/>
</dbReference>
<dbReference type="InterPro" id="IPR000846">
    <property type="entry name" value="DapB_N"/>
</dbReference>
<dbReference type="InterPro" id="IPR022664">
    <property type="entry name" value="DapB_N_CS"/>
</dbReference>
<dbReference type="InterPro" id="IPR023940">
    <property type="entry name" value="DHDPR_bac"/>
</dbReference>
<dbReference type="InterPro" id="IPR036291">
    <property type="entry name" value="NAD(P)-bd_dom_sf"/>
</dbReference>
<dbReference type="NCBIfam" id="TIGR00036">
    <property type="entry name" value="dapB"/>
    <property type="match status" value="1"/>
</dbReference>
<dbReference type="PANTHER" id="PTHR20836:SF0">
    <property type="entry name" value="4-HYDROXY-TETRAHYDRODIPICOLINATE REDUCTASE 1, CHLOROPLASTIC-RELATED"/>
    <property type="match status" value="1"/>
</dbReference>
<dbReference type="PANTHER" id="PTHR20836">
    <property type="entry name" value="DIHYDRODIPICOLINATE REDUCTASE"/>
    <property type="match status" value="1"/>
</dbReference>
<dbReference type="Pfam" id="PF05173">
    <property type="entry name" value="DapB_C"/>
    <property type="match status" value="1"/>
</dbReference>
<dbReference type="Pfam" id="PF01113">
    <property type="entry name" value="DapB_N"/>
    <property type="match status" value="1"/>
</dbReference>
<dbReference type="PIRSF" id="PIRSF000161">
    <property type="entry name" value="DHPR"/>
    <property type="match status" value="1"/>
</dbReference>
<dbReference type="SUPFAM" id="SSF55347">
    <property type="entry name" value="Glyceraldehyde-3-phosphate dehydrogenase-like, C-terminal domain"/>
    <property type="match status" value="1"/>
</dbReference>
<dbReference type="SUPFAM" id="SSF51735">
    <property type="entry name" value="NAD(P)-binding Rossmann-fold domains"/>
    <property type="match status" value="1"/>
</dbReference>
<dbReference type="PROSITE" id="PS01298">
    <property type="entry name" value="DAPB"/>
    <property type="match status" value="1"/>
</dbReference>
<organism>
    <name type="scientific">Bradyrhizobium diazoefficiens (strain JCM 10833 / BCRC 13528 / IAM 13628 / NBRC 14792 / USDA 110)</name>
    <dbReference type="NCBI Taxonomy" id="224911"/>
    <lineage>
        <taxon>Bacteria</taxon>
        <taxon>Pseudomonadati</taxon>
        <taxon>Pseudomonadota</taxon>
        <taxon>Alphaproteobacteria</taxon>
        <taxon>Hyphomicrobiales</taxon>
        <taxon>Nitrobacteraceae</taxon>
        <taxon>Bradyrhizobium</taxon>
    </lineage>
</organism>
<proteinExistence type="inferred from homology"/>